<evidence type="ECO:0000255" key="1">
    <source>
        <dbReference type="HAMAP-Rule" id="MF_03143"/>
    </source>
</evidence>
<evidence type="ECO:0000256" key="2">
    <source>
        <dbReference type="SAM" id="MobiDB-lite"/>
    </source>
</evidence>
<sequence>MAESSSNPTRINILGKDNIIIDHGIWLNFVAQDLLQNIKSSTYILITDTNLYATYVPSFQSVFEKAAPQDVRLLTYAIPPGEYSKGRDTKAEIEDWMLSHQCTRDTVIIALGGGVIGDMIGYVAATFMRGVRFVQVPTTLLAMVDSSIGGKTAIDVPMGKNLIGAFWQPERIYIDLTFLNTLPVREFINGMAEVIKTAAIWDESEFTTLEENAKAILEAVRSKNKSADRLAPIRDILKRIVLGSARVKAEVVSSDEREGGLRNLLNFGHSIGHAYEAILTPQVLHGEAVAIGMVKEAELARFLGVLKPSAVARLTKCIASYDLPTSLQDKRIVKLTAGKECPVDVLLQKMAVDKKNEGRKKKIVLLSAIGKTYEPKASVVEDRAIRIVLTPCIRVHAGVPKDLKVSVTPPGSKSISNRALTLAALGEGTTRIYNLLHSDDTQVMLNAVAQLQGASFSWEDSDVLVVKGNGGRLQATSTPLYLGNAGTASRFLTSVVALCNPTDVNSTVLTGNARMKQRPIGALVDALRANGVGVKYLEKEHSLPVQVDAAGGLAGGVMELAATISSQYVSSLLMAAPYAREPVTLRLVGGKPISQPYIDMTIAMMASFGVQVQRSAEDPNTYHIPQGTYKNPETYIVESDASSATYPLAVAAITGTTCTVPNIGSKSLQGDARFAIEVLRPMGCTVEQTDASTTVTGPPVGTLKAIPHVDMEPMTDAFLTASVLAAVASGTTQITGIANQRVKECNRIKAMKDELAKFGVTCNELEDGIEVTGIPYTELKNPTEGIYCYDDHRVAMSFGVLSTISPHPVLILERECTGKTWPGWWDTMSNYFKSHLEGEEEPHSSHVSHEKPRKGNPKSIFIIGMRGAGKSTAGKWMSEVLNRPLIDLDHELERREGQTIPEIIRSERGWEGFRKAELDLLEDVIKNNPTGHIFSCGGGIVESEAARKLLISYSQNGGIVLLVHRDTDQVVEYLMRDKTRPAYSENIREVYYRRKPWFEECSNFRYYSPHPDGSKALTEPPFDFSQFLSVICGHSNHLEEAKKKPQSSFVSLTVPNVSKALDIIPKVVVGSDAVELRVDLLEDYDPEFVAKQVALLRSAARIPIVYTVRTVSQGGKFPDDDYALALKLYRTGLQAGVEYLDLEMTMPDEVIEAVTNEKGYTHIIASHHDPKATLSWKNGGWIQYYNKALQHGDVVKLVGVARELSDNFALARFKASLAAAHDKPFIGLNMGTAGKLSRVLNGFLTPVSHPALPSKAAPGQLSAAEIRQALALIGELEPRSFYLFGKPISASRSPALHNALFRDNGLPHQYSLFETDNAADVKELIRATDFGGASVTIPLKLDIMPLLDEVSDAAKVIGAVNTIIPVGSGDKVTLRGDNTDWMGMVYALRNAGVVKVSKESPAAGMVVGSGGTTRAAVYALHDLGFAPIYVVARNADRIKALAESFPADYDIRSLSTPEEVAAESTAQPSVVISTIPADKPIEQSMREVLVASLRHPSVTNGKHVLLEMAYTPRHTPLMQLAEDAHWQTIPGLEVLAAQGWYQFQLWTGITPIYTDAQAAVMGN</sequence>
<gene>
    <name type="ORF">SMAC_02366</name>
</gene>
<comment type="function">
    <text evidence="1">The AROM polypeptide catalyzes 5 consecutive enzymatic reactions in prechorismate polyaromatic amino acid biosynthesis.</text>
</comment>
<comment type="catalytic activity">
    <reaction evidence="1">
        <text>7-phospho-2-dehydro-3-deoxy-D-arabino-heptonate = 3-dehydroquinate + phosphate</text>
        <dbReference type="Rhea" id="RHEA:21968"/>
        <dbReference type="ChEBI" id="CHEBI:32364"/>
        <dbReference type="ChEBI" id="CHEBI:43474"/>
        <dbReference type="ChEBI" id="CHEBI:58394"/>
        <dbReference type="EC" id="4.2.3.4"/>
    </reaction>
</comment>
<comment type="catalytic activity">
    <reaction evidence="1">
        <text>3-dehydroquinate = 3-dehydroshikimate + H2O</text>
        <dbReference type="Rhea" id="RHEA:21096"/>
        <dbReference type="ChEBI" id="CHEBI:15377"/>
        <dbReference type="ChEBI" id="CHEBI:16630"/>
        <dbReference type="ChEBI" id="CHEBI:32364"/>
        <dbReference type="EC" id="4.2.1.10"/>
    </reaction>
</comment>
<comment type="catalytic activity">
    <reaction evidence="1">
        <text>shikimate + NADP(+) = 3-dehydroshikimate + NADPH + H(+)</text>
        <dbReference type="Rhea" id="RHEA:17737"/>
        <dbReference type="ChEBI" id="CHEBI:15378"/>
        <dbReference type="ChEBI" id="CHEBI:16630"/>
        <dbReference type="ChEBI" id="CHEBI:36208"/>
        <dbReference type="ChEBI" id="CHEBI:57783"/>
        <dbReference type="ChEBI" id="CHEBI:58349"/>
        <dbReference type="EC" id="1.1.1.25"/>
    </reaction>
</comment>
<comment type="catalytic activity">
    <reaction evidence="1">
        <text>shikimate + ATP = 3-phosphoshikimate + ADP + H(+)</text>
        <dbReference type="Rhea" id="RHEA:13121"/>
        <dbReference type="ChEBI" id="CHEBI:15378"/>
        <dbReference type="ChEBI" id="CHEBI:30616"/>
        <dbReference type="ChEBI" id="CHEBI:36208"/>
        <dbReference type="ChEBI" id="CHEBI:145989"/>
        <dbReference type="ChEBI" id="CHEBI:456216"/>
        <dbReference type="EC" id="2.7.1.71"/>
    </reaction>
</comment>
<comment type="catalytic activity">
    <reaction evidence="1">
        <text>3-phosphoshikimate + phosphoenolpyruvate = 5-O-(1-carboxyvinyl)-3-phosphoshikimate + phosphate</text>
        <dbReference type="Rhea" id="RHEA:21256"/>
        <dbReference type="ChEBI" id="CHEBI:43474"/>
        <dbReference type="ChEBI" id="CHEBI:57701"/>
        <dbReference type="ChEBI" id="CHEBI:58702"/>
        <dbReference type="ChEBI" id="CHEBI:145989"/>
        <dbReference type="EC" id="2.5.1.19"/>
    </reaction>
</comment>
<comment type="cofactor">
    <cofactor>
        <name>Zn(2+)</name>
        <dbReference type="ChEBI" id="CHEBI:29105"/>
    </cofactor>
    <text>Binds 2 Zn(2+) ions per subunit.</text>
</comment>
<comment type="pathway">
    <text evidence="1">Metabolic intermediate biosynthesis; chorismate biosynthesis; chorismate from D-erythrose 4-phosphate and phosphoenolpyruvate: step 2/7.</text>
</comment>
<comment type="pathway">
    <text evidence="1">Metabolic intermediate biosynthesis; chorismate biosynthesis; chorismate from D-erythrose 4-phosphate and phosphoenolpyruvate: step 3/7.</text>
</comment>
<comment type="pathway">
    <text evidence="1">Metabolic intermediate biosynthesis; chorismate biosynthesis; chorismate from D-erythrose 4-phosphate and phosphoenolpyruvate: step 4/7.</text>
</comment>
<comment type="pathway">
    <text evidence="1">Metabolic intermediate biosynthesis; chorismate biosynthesis; chorismate from D-erythrose 4-phosphate and phosphoenolpyruvate: step 5/7.</text>
</comment>
<comment type="pathway">
    <text evidence="1">Metabolic intermediate biosynthesis; chorismate biosynthesis; chorismate from D-erythrose 4-phosphate and phosphoenolpyruvate: step 6/7.</text>
</comment>
<comment type="subunit">
    <text evidence="1">Homodimer.</text>
</comment>
<comment type="subcellular location">
    <subcellularLocation>
        <location evidence="1">Cytoplasm</location>
    </subcellularLocation>
</comment>
<comment type="similarity">
    <text evidence="1">In the N-terminal section; belongs to the sugar phosphate cyclases superfamily. Dehydroquinate synthase family.</text>
</comment>
<comment type="similarity">
    <text evidence="1">In the 2nd section; belongs to the EPSP synthase family.</text>
</comment>
<comment type="similarity">
    <text evidence="1">In the 3rd section; belongs to the shikimate kinase family.</text>
</comment>
<comment type="similarity">
    <text evidence="1">In the 4th section; belongs to the type-I 3-dehydroquinase family.</text>
</comment>
<comment type="similarity">
    <text evidence="1">In the C-terminal section; belongs to the shikimate dehydrogenase family.</text>
</comment>
<reference key="1">
    <citation type="journal article" date="2010" name="PLoS Genet.">
        <title>De novo assembly of a 40 Mb eukaryotic genome from short sequence reads: Sordaria macrospora, a model organism for fungal morphogenesis.</title>
        <authorList>
            <person name="Nowrousian M."/>
            <person name="Stajich J.E."/>
            <person name="Chu M."/>
            <person name="Engh I."/>
            <person name="Espagne E."/>
            <person name="Halliday K."/>
            <person name="Kamerewerd J."/>
            <person name="Kempken F."/>
            <person name="Knab B."/>
            <person name="Kuo H.-C."/>
            <person name="Osiewacz H.D."/>
            <person name="Poeggeler S."/>
            <person name="Read N.D."/>
            <person name="Seiler S."/>
            <person name="Smith K.M."/>
            <person name="Zickler D."/>
            <person name="Kueck U."/>
            <person name="Freitag M."/>
        </authorList>
    </citation>
    <scope>NUCLEOTIDE SEQUENCE [LARGE SCALE GENOMIC DNA]</scope>
    <source>
        <strain>ATCC MYA-333 / DSM 997 / K(L3346) / K-hell</strain>
    </source>
</reference>
<name>ARO1_SORMK</name>
<protein>
    <recommendedName>
        <fullName evidence="1">Pentafunctional AROM polypeptide</fullName>
    </recommendedName>
    <domain>
        <recommendedName>
            <fullName evidence="1">3-dehydroquinate synthase</fullName>
            <shortName evidence="1">DHQS</shortName>
            <ecNumber evidence="1">4.2.3.4</ecNumber>
        </recommendedName>
    </domain>
    <domain>
        <recommendedName>
            <fullName evidence="1">3-phosphoshikimate 1-carboxyvinyltransferase</fullName>
            <ecNumber evidence="1">2.5.1.19</ecNumber>
        </recommendedName>
        <alternativeName>
            <fullName evidence="1">5-enolpyruvylshikimate-3-phosphate synthase</fullName>
            <shortName evidence="1">EPSP synthase</shortName>
            <shortName evidence="1">EPSPS</shortName>
        </alternativeName>
    </domain>
    <domain>
        <recommendedName>
            <fullName evidence="1">Shikimate kinase</fullName>
            <shortName evidence="1">SK</shortName>
            <ecNumber evidence="1">2.7.1.71</ecNumber>
        </recommendedName>
    </domain>
    <domain>
        <recommendedName>
            <fullName evidence="1">3-dehydroquinate dehydratase</fullName>
            <shortName evidence="1">3-dehydroquinase</shortName>
            <ecNumber evidence="1">4.2.1.10</ecNumber>
        </recommendedName>
    </domain>
    <domain>
        <recommendedName>
            <fullName evidence="1">Shikimate dehydrogenase</fullName>
            <ecNumber evidence="1">1.1.1.25</ecNumber>
        </recommendedName>
    </domain>
</protein>
<dbReference type="EC" id="4.2.3.4" evidence="1"/>
<dbReference type="EC" id="2.5.1.19" evidence="1"/>
<dbReference type="EC" id="2.7.1.71" evidence="1"/>
<dbReference type="EC" id="4.2.1.10" evidence="1"/>
<dbReference type="EC" id="1.1.1.25" evidence="1"/>
<dbReference type="EMBL" id="CABT02000003">
    <property type="protein sequence ID" value="CCC07359.1"/>
    <property type="molecule type" value="Genomic_DNA"/>
</dbReference>
<dbReference type="RefSeq" id="XP_003350695.1">
    <property type="nucleotide sequence ID" value="XM_003350647.1"/>
</dbReference>
<dbReference type="SMR" id="D1ZA70"/>
<dbReference type="FunCoup" id="D1ZA70">
    <property type="interactions" value="448"/>
</dbReference>
<dbReference type="STRING" id="771870.D1ZA70"/>
<dbReference type="GeneID" id="10808258"/>
<dbReference type="KEGG" id="smp:10808258"/>
<dbReference type="VEuPathDB" id="FungiDB:SMAC_02366"/>
<dbReference type="eggNOG" id="KOG0692">
    <property type="taxonomic scope" value="Eukaryota"/>
</dbReference>
<dbReference type="HOGENOM" id="CLU_001201_1_2_1"/>
<dbReference type="InParanoid" id="D1ZA70"/>
<dbReference type="OMA" id="SWANMSW"/>
<dbReference type="OrthoDB" id="197068at2759"/>
<dbReference type="UniPathway" id="UPA00053">
    <property type="reaction ID" value="UER00085"/>
</dbReference>
<dbReference type="UniPathway" id="UPA00053">
    <property type="reaction ID" value="UER00086"/>
</dbReference>
<dbReference type="UniPathway" id="UPA00053">
    <property type="reaction ID" value="UER00087"/>
</dbReference>
<dbReference type="UniPathway" id="UPA00053">
    <property type="reaction ID" value="UER00088"/>
</dbReference>
<dbReference type="UniPathway" id="UPA00053">
    <property type="reaction ID" value="UER00089"/>
</dbReference>
<dbReference type="Proteomes" id="UP000001881">
    <property type="component" value="Unassembled WGS sequence"/>
</dbReference>
<dbReference type="GO" id="GO:0005737">
    <property type="term" value="C:cytoplasm"/>
    <property type="evidence" value="ECO:0007669"/>
    <property type="project" value="UniProtKB-SubCell"/>
</dbReference>
<dbReference type="GO" id="GO:0003855">
    <property type="term" value="F:3-dehydroquinate dehydratase activity"/>
    <property type="evidence" value="ECO:0007669"/>
    <property type="project" value="UniProtKB-UniRule"/>
</dbReference>
<dbReference type="GO" id="GO:0003856">
    <property type="term" value="F:3-dehydroquinate synthase activity"/>
    <property type="evidence" value="ECO:0007669"/>
    <property type="project" value="UniProtKB-UniRule"/>
</dbReference>
<dbReference type="GO" id="GO:0003866">
    <property type="term" value="F:3-phosphoshikimate 1-carboxyvinyltransferase activity"/>
    <property type="evidence" value="ECO:0007669"/>
    <property type="project" value="UniProtKB-UniRule"/>
</dbReference>
<dbReference type="GO" id="GO:0005524">
    <property type="term" value="F:ATP binding"/>
    <property type="evidence" value="ECO:0007669"/>
    <property type="project" value="UniProtKB-UniRule"/>
</dbReference>
<dbReference type="GO" id="GO:0046872">
    <property type="term" value="F:metal ion binding"/>
    <property type="evidence" value="ECO:0007669"/>
    <property type="project" value="UniProtKB-UniRule"/>
</dbReference>
<dbReference type="GO" id="GO:0004764">
    <property type="term" value="F:shikimate 3-dehydrogenase (NADP+) activity"/>
    <property type="evidence" value="ECO:0007669"/>
    <property type="project" value="UniProtKB-UniRule"/>
</dbReference>
<dbReference type="GO" id="GO:0004765">
    <property type="term" value="F:shikimate kinase activity"/>
    <property type="evidence" value="ECO:0007669"/>
    <property type="project" value="UniProtKB-UniRule"/>
</dbReference>
<dbReference type="GO" id="GO:0008652">
    <property type="term" value="P:amino acid biosynthetic process"/>
    <property type="evidence" value="ECO:0007669"/>
    <property type="project" value="UniProtKB-KW"/>
</dbReference>
<dbReference type="GO" id="GO:0009073">
    <property type="term" value="P:aromatic amino acid family biosynthetic process"/>
    <property type="evidence" value="ECO:0007669"/>
    <property type="project" value="UniProtKB-UniRule"/>
</dbReference>
<dbReference type="GO" id="GO:0009423">
    <property type="term" value="P:chorismate biosynthetic process"/>
    <property type="evidence" value="ECO:0007669"/>
    <property type="project" value="UniProtKB-UniRule"/>
</dbReference>
<dbReference type="CDD" id="cd00502">
    <property type="entry name" value="DHQase_I"/>
    <property type="match status" value="1"/>
</dbReference>
<dbReference type="CDD" id="cd08195">
    <property type="entry name" value="DHQS"/>
    <property type="match status" value="1"/>
</dbReference>
<dbReference type="CDD" id="cd01556">
    <property type="entry name" value="EPSP_synthase"/>
    <property type="match status" value="1"/>
</dbReference>
<dbReference type="CDD" id="cd01065">
    <property type="entry name" value="NAD_bind_Shikimate_DH"/>
    <property type="match status" value="1"/>
</dbReference>
<dbReference type="CDD" id="cd00464">
    <property type="entry name" value="SK"/>
    <property type="match status" value="1"/>
</dbReference>
<dbReference type="FunFam" id="1.20.1090.10:FF:000007">
    <property type="entry name" value="Pentafunctional AROM polypeptide"/>
    <property type="match status" value="1"/>
</dbReference>
<dbReference type="FunFam" id="3.20.20.70:FF:000135">
    <property type="entry name" value="Pentafunctional AROM polypeptide"/>
    <property type="match status" value="1"/>
</dbReference>
<dbReference type="FunFam" id="3.40.50.10860:FF:000015">
    <property type="entry name" value="Pentafunctional AROM polypeptide"/>
    <property type="match status" value="1"/>
</dbReference>
<dbReference type="FunFam" id="3.40.50.1970:FF:000007">
    <property type="entry name" value="Pentafunctional AROM polypeptide"/>
    <property type="match status" value="1"/>
</dbReference>
<dbReference type="FunFam" id="3.40.50.300:FF:001256">
    <property type="entry name" value="Pentafunctional AROM polypeptide"/>
    <property type="match status" value="1"/>
</dbReference>
<dbReference type="FunFam" id="3.65.10.10:FF:000007">
    <property type="entry name" value="Pentafunctional AROM polypeptide"/>
    <property type="match status" value="1"/>
</dbReference>
<dbReference type="FunFam" id="3.65.10.10:FF:000008">
    <property type="entry name" value="Pentafunctional AROM polypeptide"/>
    <property type="match status" value="1"/>
</dbReference>
<dbReference type="Gene3D" id="3.40.50.1970">
    <property type="match status" value="1"/>
</dbReference>
<dbReference type="Gene3D" id="3.20.20.70">
    <property type="entry name" value="Aldolase class I"/>
    <property type="match status" value="1"/>
</dbReference>
<dbReference type="Gene3D" id="1.20.1090.10">
    <property type="entry name" value="Dehydroquinate synthase-like - alpha domain"/>
    <property type="match status" value="1"/>
</dbReference>
<dbReference type="Gene3D" id="3.65.10.10">
    <property type="entry name" value="Enolpyruvate transferase domain"/>
    <property type="match status" value="2"/>
</dbReference>
<dbReference type="Gene3D" id="3.40.50.10860">
    <property type="entry name" value="Leucine Dehydrogenase, chain A, domain 1"/>
    <property type="match status" value="1"/>
</dbReference>
<dbReference type="Gene3D" id="3.40.50.720">
    <property type="entry name" value="NAD(P)-binding Rossmann-like Domain"/>
    <property type="match status" value="1"/>
</dbReference>
<dbReference type="Gene3D" id="3.40.50.300">
    <property type="entry name" value="P-loop containing nucleotide triphosphate hydrolases"/>
    <property type="match status" value="1"/>
</dbReference>
<dbReference type="HAMAP" id="MF_00210">
    <property type="entry name" value="EPSP_synth"/>
    <property type="match status" value="1"/>
</dbReference>
<dbReference type="HAMAP" id="MF_03143">
    <property type="entry name" value="Pentafunct_AroM"/>
    <property type="match status" value="1"/>
</dbReference>
<dbReference type="HAMAP" id="MF_00109">
    <property type="entry name" value="Shikimate_kinase"/>
    <property type="match status" value="1"/>
</dbReference>
<dbReference type="InterPro" id="IPR018508">
    <property type="entry name" value="3-dehydroquinate_DH_AS"/>
</dbReference>
<dbReference type="InterPro" id="IPR013785">
    <property type="entry name" value="Aldolase_TIM"/>
</dbReference>
<dbReference type="InterPro" id="IPR046346">
    <property type="entry name" value="Aminoacid_DH-like_N_sf"/>
</dbReference>
<dbReference type="InterPro" id="IPR016037">
    <property type="entry name" value="DHQ_synth_AroB"/>
</dbReference>
<dbReference type="InterPro" id="IPR030960">
    <property type="entry name" value="DHQS/DOIS_N"/>
</dbReference>
<dbReference type="InterPro" id="IPR056179">
    <property type="entry name" value="DHQS_C"/>
</dbReference>
<dbReference type="InterPro" id="IPR001381">
    <property type="entry name" value="DHquinase_I"/>
</dbReference>
<dbReference type="InterPro" id="IPR001986">
    <property type="entry name" value="Enolpyruvate_Tfrase_dom"/>
</dbReference>
<dbReference type="InterPro" id="IPR036968">
    <property type="entry name" value="Enolpyruvate_Tfrase_sf"/>
</dbReference>
<dbReference type="InterPro" id="IPR006264">
    <property type="entry name" value="EPSP_synthase"/>
</dbReference>
<dbReference type="InterPro" id="IPR023193">
    <property type="entry name" value="EPSP_synthase_CS"/>
</dbReference>
<dbReference type="InterPro" id="IPR036291">
    <property type="entry name" value="NAD(P)-bd_dom_sf"/>
</dbReference>
<dbReference type="InterPro" id="IPR027417">
    <property type="entry name" value="P-loop_NTPase"/>
</dbReference>
<dbReference type="InterPro" id="IPR008289">
    <property type="entry name" value="Pentafunct_AroM"/>
</dbReference>
<dbReference type="InterPro" id="IPR013792">
    <property type="entry name" value="RNA3'P_cycl/enolpyr_Trfase_a/b"/>
</dbReference>
<dbReference type="InterPro" id="IPR031322">
    <property type="entry name" value="Shikimate/glucono_kinase"/>
</dbReference>
<dbReference type="InterPro" id="IPR013708">
    <property type="entry name" value="Shikimate_DH-bd_N"/>
</dbReference>
<dbReference type="InterPro" id="IPR010110">
    <property type="entry name" value="Shikimate_DH_AroM-type"/>
</dbReference>
<dbReference type="InterPro" id="IPR000623">
    <property type="entry name" value="Shikimate_kinase/TSH1"/>
</dbReference>
<dbReference type="InterPro" id="IPR023000">
    <property type="entry name" value="Shikimate_kinase_CS"/>
</dbReference>
<dbReference type="NCBIfam" id="TIGR01356">
    <property type="entry name" value="aroA"/>
    <property type="match status" value="1"/>
</dbReference>
<dbReference type="NCBIfam" id="TIGR01357">
    <property type="entry name" value="aroB"/>
    <property type="match status" value="1"/>
</dbReference>
<dbReference type="NCBIfam" id="TIGR01093">
    <property type="entry name" value="aroD"/>
    <property type="match status" value="1"/>
</dbReference>
<dbReference type="NCBIfam" id="TIGR01809">
    <property type="entry name" value="Shik-DH-AROM"/>
    <property type="match status" value="1"/>
</dbReference>
<dbReference type="PANTHER" id="PTHR21090">
    <property type="entry name" value="AROM/DEHYDROQUINATE SYNTHASE"/>
    <property type="match status" value="1"/>
</dbReference>
<dbReference type="PANTHER" id="PTHR21090:SF5">
    <property type="entry name" value="PENTAFUNCTIONAL AROM POLYPEPTIDE"/>
    <property type="match status" value="1"/>
</dbReference>
<dbReference type="Pfam" id="PF01761">
    <property type="entry name" value="DHQ_synthase"/>
    <property type="match status" value="1"/>
</dbReference>
<dbReference type="Pfam" id="PF24621">
    <property type="entry name" value="DHQS_C"/>
    <property type="match status" value="1"/>
</dbReference>
<dbReference type="Pfam" id="PF01487">
    <property type="entry name" value="DHquinase_I"/>
    <property type="match status" value="1"/>
</dbReference>
<dbReference type="Pfam" id="PF00275">
    <property type="entry name" value="EPSP_synthase"/>
    <property type="match status" value="1"/>
</dbReference>
<dbReference type="Pfam" id="PF08501">
    <property type="entry name" value="Shikimate_dh_N"/>
    <property type="match status" value="1"/>
</dbReference>
<dbReference type="Pfam" id="PF01202">
    <property type="entry name" value="SKI"/>
    <property type="match status" value="1"/>
</dbReference>
<dbReference type="PIRSF" id="PIRSF000514">
    <property type="entry name" value="Pentafunct_AroM"/>
    <property type="match status" value="1"/>
</dbReference>
<dbReference type="PRINTS" id="PR01100">
    <property type="entry name" value="SHIKIMTKNASE"/>
</dbReference>
<dbReference type="SUPFAM" id="SSF51569">
    <property type="entry name" value="Aldolase"/>
    <property type="match status" value="1"/>
</dbReference>
<dbReference type="SUPFAM" id="SSF53223">
    <property type="entry name" value="Aminoacid dehydrogenase-like, N-terminal domain"/>
    <property type="match status" value="1"/>
</dbReference>
<dbReference type="SUPFAM" id="SSF56796">
    <property type="entry name" value="Dehydroquinate synthase-like"/>
    <property type="match status" value="1"/>
</dbReference>
<dbReference type="SUPFAM" id="SSF55205">
    <property type="entry name" value="EPT/RTPC-like"/>
    <property type="match status" value="1"/>
</dbReference>
<dbReference type="SUPFAM" id="SSF51735">
    <property type="entry name" value="NAD(P)-binding Rossmann-fold domains"/>
    <property type="match status" value="1"/>
</dbReference>
<dbReference type="SUPFAM" id="SSF52540">
    <property type="entry name" value="P-loop containing nucleoside triphosphate hydrolases"/>
    <property type="match status" value="1"/>
</dbReference>
<dbReference type="PROSITE" id="PS01028">
    <property type="entry name" value="DEHYDROQUINASE_I"/>
    <property type="match status" value="1"/>
</dbReference>
<dbReference type="PROSITE" id="PS00104">
    <property type="entry name" value="EPSP_SYNTHASE_1"/>
    <property type="match status" value="1"/>
</dbReference>
<dbReference type="PROSITE" id="PS00885">
    <property type="entry name" value="EPSP_SYNTHASE_2"/>
    <property type="match status" value="1"/>
</dbReference>
<dbReference type="PROSITE" id="PS01128">
    <property type="entry name" value="SHIKIMATE_KINASE"/>
    <property type="match status" value="1"/>
</dbReference>
<keyword id="KW-0028">Amino-acid biosynthesis</keyword>
<keyword id="KW-0057">Aromatic amino acid biosynthesis</keyword>
<keyword id="KW-0067">ATP-binding</keyword>
<keyword id="KW-0963">Cytoplasm</keyword>
<keyword id="KW-0418">Kinase</keyword>
<keyword id="KW-0456">Lyase</keyword>
<keyword id="KW-0479">Metal-binding</keyword>
<keyword id="KW-0511">Multifunctional enzyme</keyword>
<keyword id="KW-0521">NADP</keyword>
<keyword id="KW-0547">Nucleotide-binding</keyword>
<keyword id="KW-0560">Oxidoreductase</keyword>
<keyword id="KW-1185">Reference proteome</keyword>
<keyword id="KW-0808">Transferase</keyword>
<keyword id="KW-0862">Zinc</keyword>
<feature type="chain" id="PRO_0000406741" description="Pentafunctional AROM polypeptide">
    <location>
        <begin position="1"/>
        <end position="1563"/>
    </location>
</feature>
<feature type="region of interest" description="3-dehydroquinate synthase">
    <location>
        <begin position="1"/>
        <end position="382"/>
    </location>
</feature>
<feature type="region of interest" description="EPSP synthase">
    <location>
        <begin position="395"/>
        <end position="834"/>
    </location>
</feature>
<feature type="region of interest" description="Disordered" evidence="2">
    <location>
        <begin position="836"/>
        <end position="857"/>
    </location>
</feature>
<feature type="region of interest" description="Shikimate kinase">
    <location>
        <begin position="857"/>
        <end position="1051"/>
    </location>
</feature>
<feature type="region of interest" description="3-dehydroquinase">
    <location>
        <begin position="1052"/>
        <end position="1265"/>
    </location>
</feature>
<feature type="region of interest" description="Shikimate dehydrogenase">
    <location>
        <begin position="1278"/>
        <end position="1563"/>
    </location>
</feature>
<feature type="compositionally biased region" description="Basic and acidic residues" evidence="2">
    <location>
        <begin position="836"/>
        <end position="850"/>
    </location>
</feature>
<feature type="active site" description="Proton acceptor; for 3-dehydroquinate synthase activity" evidence="1">
    <location>
        <position position="258"/>
    </location>
</feature>
<feature type="active site" description="Proton acceptor; for 3-dehydroquinate synthase activity" evidence="1">
    <location>
        <position position="273"/>
    </location>
</feature>
<feature type="active site" description="For EPSP synthase activity" evidence="1">
    <location>
        <position position="816"/>
    </location>
</feature>
<feature type="active site" description="Proton acceptor; for 3-dehydroquinate dehydratase activity" evidence="1">
    <location>
        <position position="1168"/>
    </location>
</feature>
<feature type="active site" description="Schiff-base intermediate with substrate; for 3-dehydroquinate dehydratase activity" evidence="1">
    <location>
        <position position="1196"/>
    </location>
</feature>
<feature type="binding site" evidence="1">
    <location>
        <begin position="48"/>
        <end position="50"/>
    </location>
    <ligand>
        <name>NAD(+)</name>
        <dbReference type="ChEBI" id="CHEBI:57540"/>
    </ligand>
</feature>
<feature type="binding site" evidence="1">
    <location>
        <begin position="82"/>
        <end position="85"/>
    </location>
    <ligand>
        <name>NAD(+)</name>
        <dbReference type="ChEBI" id="CHEBI:57540"/>
    </ligand>
</feature>
<feature type="binding site" evidence="1">
    <location>
        <begin position="113"/>
        <end position="115"/>
    </location>
    <ligand>
        <name>NAD(+)</name>
        <dbReference type="ChEBI" id="CHEBI:57540"/>
    </ligand>
</feature>
<feature type="binding site" evidence="1">
    <location>
        <position position="118"/>
    </location>
    <ligand>
        <name>NAD(+)</name>
        <dbReference type="ChEBI" id="CHEBI:57540"/>
    </ligand>
</feature>
<feature type="binding site" evidence="1">
    <location>
        <position position="129"/>
    </location>
    <ligand>
        <name>7-phospho-2-dehydro-3-deoxy-D-arabino-heptonate</name>
        <dbReference type="ChEBI" id="CHEBI:58394"/>
    </ligand>
</feature>
<feature type="binding site" evidence="1">
    <location>
        <begin position="138"/>
        <end position="139"/>
    </location>
    <ligand>
        <name>NAD(+)</name>
        <dbReference type="ChEBI" id="CHEBI:57540"/>
    </ligand>
</feature>
<feature type="binding site" evidence="1">
    <location>
        <position position="145"/>
    </location>
    <ligand>
        <name>7-phospho-2-dehydro-3-deoxy-D-arabino-heptonate</name>
        <dbReference type="ChEBI" id="CHEBI:58394"/>
    </ligand>
</feature>
<feature type="binding site" evidence="1">
    <location>
        <position position="151"/>
    </location>
    <ligand>
        <name>7-phospho-2-dehydro-3-deoxy-D-arabino-heptonate</name>
        <dbReference type="ChEBI" id="CHEBI:58394"/>
    </ligand>
</feature>
<feature type="binding site" evidence="1">
    <location>
        <position position="160"/>
    </location>
    <ligand>
        <name>NAD(+)</name>
        <dbReference type="ChEBI" id="CHEBI:57540"/>
    </ligand>
</feature>
<feature type="binding site" evidence="1">
    <location>
        <position position="161"/>
    </location>
    <ligand>
        <name>7-phospho-2-dehydro-3-deoxy-D-arabino-heptonate</name>
        <dbReference type="ChEBI" id="CHEBI:58394"/>
    </ligand>
</feature>
<feature type="binding site" evidence="1">
    <location>
        <begin position="178"/>
        <end position="181"/>
    </location>
    <ligand>
        <name>NAD(+)</name>
        <dbReference type="ChEBI" id="CHEBI:57540"/>
    </ligand>
</feature>
<feature type="binding site" evidence="1">
    <location>
        <position position="189"/>
    </location>
    <ligand>
        <name>NAD(+)</name>
        <dbReference type="ChEBI" id="CHEBI:57540"/>
    </ligand>
</feature>
<feature type="binding site" evidence="1">
    <location>
        <begin position="193"/>
        <end position="196"/>
    </location>
    <ligand>
        <name>7-phospho-2-dehydro-3-deoxy-D-arabino-heptonate</name>
        <dbReference type="ChEBI" id="CHEBI:58394"/>
    </ligand>
</feature>
<feature type="binding site" evidence="1">
    <location>
        <position position="193"/>
    </location>
    <ligand>
        <name>Zn(2+)</name>
        <dbReference type="ChEBI" id="CHEBI:29105"/>
        <note>catalytic</note>
    </ligand>
</feature>
<feature type="binding site" evidence="1">
    <location>
        <position position="248"/>
    </location>
    <ligand>
        <name>7-phospho-2-dehydro-3-deoxy-D-arabino-heptonate</name>
        <dbReference type="ChEBI" id="CHEBI:58394"/>
    </ligand>
</feature>
<feature type="binding site" evidence="1">
    <location>
        <begin position="262"/>
        <end position="266"/>
    </location>
    <ligand>
        <name>7-phospho-2-dehydro-3-deoxy-D-arabino-heptonate</name>
        <dbReference type="ChEBI" id="CHEBI:58394"/>
    </ligand>
</feature>
<feature type="binding site" evidence="1">
    <location>
        <position position="269"/>
    </location>
    <ligand>
        <name>7-phospho-2-dehydro-3-deoxy-D-arabino-heptonate</name>
        <dbReference type="ChEBI" id="CHEBI:58394"/>
    </ligand>
</feature>
<feature type="binding site" evidence="1">
    <location>
        <position position="269"/>
    </location>
    <ligand>
        <name>Zn(2+)</name>
        <dbReference type="ChEBI" id="CHEBI:29105"/>
        <note>catalytic</note>
    </ligand>
</feature>
<feature type="binding site" evidence="1">
    <location>
        <position position="285"/>
    </location>
    <ligand>
        <name>7-phospho-2-dehydro-3-deoxy-D-arabino-heptonate</name>
        <dbReference type="ChEBI" id="CHEBI:58394"/>
    </ligand>
</feature>
<feature type="binding site" evidence="1">
    <location>
        <position position="285"/>
    </location>
    <ligand>
        <name>Zn(2+)</name>
        <dbReference type="ChEBI" id="CHEBI:29105"/>
        <note>catalytic</note>
    </ligand>
</feature>
<feature type="binding site" evidence="1">
    <location>
        <position position="354"/>
    </location>
    <ligand>
        <name>7-phospho-2-dehydro-3-deoxy-D-arabino-heptonate</name>
        <dbReference type="ChEBI" id="CHEBI:58394"/>
    </ligand>
</feature>
<feature type="binding site" evidence="1">
    <location>
        <begin position="864"/>
        <end position="871"/>
    </location>
    <ligand>
        <name>ATP</name>
        <dbReference type="ChEBI" id="CHEBI:30616"/>
    </ligand>
</feature>
<accession>D1ZA70</accession>
<accession>F7VPD1</accession>
<proteinExistence type="inferred from homology"/>
<organism>
    <name type="scientific">Sordaria macrospora (strain ATCC MYA-333 / DSM 997 / K(L3346) / K-hell)</name>
    <dbReference type="NCBI Taxonomy" id="771870"/>
    <lineage>
        <taxon>Eukaryota</taxon>
        <taxon>Fungi</taxon>
        <taxon>Dikarya</taxon>
        <taxon>Ascomycota</taxon>
        <taxon>Pezizomycotina</taxon>
        <taxon>Sordariomycetes</taxon>
        <taxon>Sordariomycetidae</taxon>
        <taxon>Sordariales</taxon>
        <taxon>Sordariaceae</taxon>
        <taxon>Sordaria</taxon>
    </lineage>
</organism>